<comment type="interaction">
    <interactant intactId="EBI-12111452">
        <id>O14668</id>
    </interactant>
    <interactant intactId="EBI-1224427">
        <id>P07919</id>
        <label>UQCRH</label>
    </interactant>
    <organismsDiffer>false</organismsDiffer>
    <experiments>3</experiments>
</comment>
<comment type="subcellular location">
    <subcellularLocation>
        <location evidence="6">Membrane</location>
        <topology evidence="6">Single-pass type I membrane protein</topology>
    </subcellularLocation>
</comment>
<comment type="alternative products">
    <event type="alternative splicing"/>
    <isoform>
        <id>O14668-1</id>
        <name>1</name>
        <sequence type="displayed"/>
    </isoform>
    <isoform>
        <id>O14668-2</id>
        <name>2</name>
        <sequence type="described" ref="VSP_044789 VSP_044790"/>
    </isoform>
</comment>
<comment type="tissue specificity">
    <text>Highly expressed in the spinal cord.</text>
</comment>
<comment type="PTM">
    <text>Gla residues are produced after subsequent post-translational modifications of glutamate by a vitamin K-dependent gamma-carboxylase.</text>
</comment>
<protein>
    <recommendedName>
        <fullName>Transmembrane gamma-carboxyglutamic acid protein 1</fullName>
    </recommendedName>
    <alternativeName>
        <fullName>Proline-rich gamma-carboxyglutamic acid protein 1</fullName>
        <shortName>Proline-rich Gla protein 1</shortName>
    </alternativeName>
</protein>
<sequence>MGRVFLTGEKANSILKRYPRANGFFEEIRQGNIERECKEEFCTFEEAREAFENNEKTKEFWSTYTKAQQGESNRGSDWFQFYLTFPLIFGLFIILLVIFLIWRCFLRNKTRRQTVTEGHIPFPQHLNIITPPPPPDEVFDSSGLSPGFLGYVVGRSDSVSTRLSNCDPPPTYEEATGQVNLQRSETEPHLDPPPEYEDIVNSNSASAIPMVPVVTTIK</sequence>
<keyword id="KW-0025">Alternative splicing</keyword>
<keyword id="KW-1015">Disulfide bond</keyword>
<keyword id="KW-0472">Membrane</keyword>
<keyword id="KW-1267">Proteomics identification</keyword>
<keyword id="KW-1185">Reference proteome</keyword>
<keyword id="KW-0812">Transmembrane</keyword>
<keyword id="KW-1133">Transmembrane helix</keyword>
<name>TMG1_HUMAN</name>
<proteinExistence type="evidence at protein level"/>
<accession>O14668</accession>
<accession>B2R7A3</accession>
<accession>C9JXL7</accession>
<accession>D3DWA9</accession>
<accession>Q5JT66</accession>
<evidence type="ECO:0000255" key="1"/>
<evidence type="ECO:0000255" key="2">
    <source>
        <dbReference type="PROSITE-ProRule" id="PRU00463"/>
    </source>
</evidence>
<evidence type="ECO:0000256" key="3">
    <source>
        <dbReference type="SAM" id="MobiDB-lite"/>
    </source>
</evidence>
<evidence type="ECO:0000269" key="4">
    <source>
    </source>
</evidence>
<evidence type="ECO:0000303" key="5">
    <source>
    </source>
</evidence>
<evidence type="ECO:0000305" key="6"/>
<gene>
    <name type="primary">PRRG1</name>
    <name type="synonym">PRGP1</name>
    <name type="synonym">TMG1</name>
</gene>
<feature type="propeptide" id="PRO_0000022541" evidence="1">
    <location>
        <begin position="1"/>
        <end position="20"/>
    </location>
</feature>
<feature type="chain" id="PRO_0000022542" description="Transmembrane gamma-carboxyglutamic acid protein 1">
    <location>
        <begin position="21"/>
        <end position="218"/>
    </location>
</feature>
<feature type="topological domain" description="Extracellular" evidence="1">
    <location>
        <begin position="21"/>
        <end position="83"/>
    </location>
</feature>
<feature type="transmembrane region" description="Helical" evidence="1">
    <location>
        <begin position="84"/>
        <end position="106"/>
    </location>
</feature>
<feature type="topological domain" description="Cytoplasmic" evidence="1">
    <location>
        <begin position="107"/>
        <end position="218"/>
    </location>
</feature>
<feature type="domain" description="Gla" evidence="2">
    <location>
        <begin position="21"/>
        <end position="66"/>
    </location>
</feature>
<feature type="region of interest" description="Disordered" evidence="3">
    <location>
        <begin position="161"/>
        <end position="195"/>
    </location>
</feature>
<feature type="disulfide bond" evidence="2">
    <location>
        <begin position="37"/>
        <end position="42"/>
    </location>
</feature>
<feature type="splice variant" id="VSP_044789" description="In isoform 2." evidence="5">
    <original>KEFWSTYTKAQQGESNRGSDWFQFY</original>
    <variation>GLVLLPRLECSCEHGSLQPQLPVPK</variation>
    <location>
        <begin position="58"/>
        <end position="82"/>
    </location>
</feature>
<feature type="splice variant" id="VSP_044790" description="In isoform 2." evidence="5">
    <location>
        <begin position="83"/>
        <end position="218"/>
    </location>
</feature>
<feature type="sequence variant" id="VAR_036268" description="In a breast cancer sample; somatic mutation." evidence="4">
    <original>F</original>
    <variation>I</variation>
    <location>
        <position position="60"/>
    </location>
</feature>
<feature type="sequence conflict" description="In Ref. 5; BC041591." evidence="6" ref="5">
    <original>Q</original>
    <variation>R</variation>
    <location sequence="O14668-2">
        <position position="75"/>
    </location>
</feature>
<dbReference type="EMBL" id="AF009242">
    <property type="protein sequence ID" value="AAB67070.1"/>
    <property type="molecule type" value="mRNA"/>
</dbReference>
<dbReference type="EMBL" id="AK312904">
    <property type="protein sequence ID" value="BAG35750.1"/>
    <property type="molecule type" value="mRNA"/>
</dbReference>
<dbReference type="EMBL" id="AL356858">
    <property type="protein sequence ID" value="CAI40412.1"/>
    <property type="molecule type" value="Genomic_DNA"/>
</dbReference>
<dbReference type="EMBL" id="CH471141">
    <property type="protein sequence ID" value="EAW59457.1"/>
    <property type="molecule type" value="Genomic_DNA"/>
</dbReference>
<dbReference type="EMBL" id="CH471141">
    <property type="protein sequence ID" value="EAW59458.1"/>
    <property type="molecule type" value="Genomic_DNA"/>
</dbReference>
<dbReference type="EMBL" id="BC041591">
    <property type="status" value="NOT_ANNOTATED_CDS"/>
    <property type="molecule type" value="mRNA"/>
</dbReference>
<dbReference type="EMBL" id="BC060833">
    <property type="protein sequence ID" value="AAH60833.1"/>
    <property type="molecule type" value="mRNA"/>
</dbReference>
<dbReference type="CCDS" id="CCDS14239.1">
    <molecule id="O14668-1"/>
</dbReference>
<dbReference type="CCDS" id="CCDS55397.1">
    <molecule id="O14668-2"/>
</dbReference>
<dbReference type="RefSeq" id="NP_000941.1">
    <molecule id="O14668-1"/>
    <property type="nucleotide sequence ID" value="NM_000950.3"/>
</dbReference>
<dbReference type="RefSeq" id="NP_001135867.1">
    <molecule id="O14668-1"/>
    <property type="nucleotide sequence ID" value="NM_001142395.2"/>
</dbReference>
<dbReference type="RefSeq" id="NP_001166957.1">
    <molecule id="O14668-2"/>
    <property type="nucleotide sequence ID" value="NM_001173486.2"/>
</dbReference>
<dbReference type="RefSeq" id="NP_001166960.1">
    <molecule id="O14668-1"/>
    <property type="nucleotide sequence ID" value="NM_001173489.2"/>
</dbReference>
<dbReference type="RefSeq" id="NP_001166961.1">
    <molecule id="O14668-1"/>
    <property type="nucleotide sequence ID" value="NM_001173490.2"/>
</dbReference>
<dbReference type="SMR" id="O14668"/>
<dbReference type="BioGRID" id="111621">
    <property type="interactions" value="16"/>
</dbReference>
<dbReference type="FunCoup" id="O14668">
    <property type="interactions" value="364"/>
</dbReference>
<dbReference type="IntAct" id="O14668">
    <property type="interactions" value="12"/>
</dbReference>
<dbReference type="STRING" id="9606.ENSP00000444278"/>
<dbReference type="iPTMnet" id="O14668"/>
<dbReference type="PhosphoSitePlus" id="O14668"/>
<dbReference type="SwissPalm" id="O14668"/>
<dbReference type="BioMuta" id="PRRG1"/>
<dbReference type="jPOST" id="O14668"/>
<dbReference type="MassIVE" id="O14668"/>
<dbReference type="PaxDb" id="9606-ENSP00000444278"/>
<dbReference type="PeptideAtlas" id="O14668"/>
<dbReference type="ProteomicsDB" id="12132"/>
<dbReference type="ProteomicsDB" id="48160">
    <molecule id="O14668-1"/>
</dbReference>
<dbReference type="Antibodypedia" id="35083">
    <property type="antibodies" value="114 antibodies from 20 providers"/>
</dbReference>
<dbReference type="DNASU" id="5638"/>
<dbReference type="Ensembl" id="ENST00000378628.9">
    <molecule id="O14668-1"/>
    <property type="protein sequence ID" value="ENSP00000367894.4"/>
    <property type="gene ID" value="ENSG00000130962.19"/>
</dbReference>
<dbReference type="Ensembl" id="ENST00000449135.6">
    <molecule id="O14668-1"/>
    <property type="protein sequence ID" value="ENSP00000390332.2"/>
    <property type="gene ID" value="ENSG00000130962.19"/>
</dbReference>
<dbReference type="Ensembl" id="ENST00000463135.1">
    <molecule id="O14668-2"/>
    <property type="protein sequence ID" value="ENSP00000419999.1"/>
    <property type="gene ID" value="ENSG00000130962.19"/>
</dbReference>
<dbReference type="GeneID" id="5638"/>
<dbReference type="KEGG" id="hsa:5638"/>
<dbReference type="MANE-Select" id="ENST00000378628.9">
    <property type="protein sequence ID" value="ENSP00000367894.4"/>
    <property type="RefSeq nucleotide sequence ID" value="NM_001142395.2"/>
    <property type="RefSeq protein sequence ID" value="NP_001135867.1"/>
</dbReference>
<dbReference type="UCSC" id="uc004ddn.4">
    <molecule id="O14668-1"/>
    <property type="organism name" value="human"/>
</dbReference>
<dbReference type="AGR" id="HGNC:9469"/>
<dbReference type="CTD" id="5638"/>
<dbReference type="DisGeNET" id="5638"/>
<dbReference type="GeneCards" id="PRRG1"/>
<dbReference type="HGNC" id="HGNC:9469">
    <property type="gene designation" value="PRRG1"/>
</dbReference>
<dbReference type="HPA" id="ENSG00000130962">
    <property type="expression patterns" value="Tissue enhanced (brain)"/>
</dbReference>
<dbReference type="MIM" id="300935">
    <property type="type" value="gene"/>
</dbReference>
<dbReference type="neXtProt" id="NX_O14668"/>
<dbReference type="OpenTargets" id="ENSG00000130962"/>
<dbReference type="PharmGKB" id="PA33824"/>
<dbReference type="VEuPathDB" id="HostDB:ENSG00000130962"/>
<dbReference type="eggNOG" id="ENOG502RU75">
    <property type="taxonomic scope" value="Eukaryota"/>
</dbReference>
<dbReference type="GeneTree" id="ENSGT00940000158538"/>
<dbReference type="HOGENOM" id="CLU_103591_0_0_1"/>
<dbReference type="InParanoid" id="O14668"/>
<dbReference type="OMA" id="RTNEFWT"/>
<dbReference type="OrthoDB" id="9942362at2759"/>
<dbReference type="PAN-GO" id="O14668">
    <property type="GO annotations" value="1 GO annotation based on evolutionary models"/>
</dbReference>
<dbReference type="PhylomeDB" id="O14668"/>
<dbReference type="TreeFam" id="TF332123"/>
<dbReference type="PathwayCommons" id="O14668"/>
<dbReference type="SignaLink" id="O14668"/>
<dbReference type="BioGRID-ORCS" id="5638">
    <property type="hits" value="9 hits in 772 CRISPR screens"/>
</dbReference>
<dbReference type="ChiTaRS" id="PRRG1">
    <property type="organism name" value="human"/>
</dbReference>
<dbReference type="GenomeRNAi" id="5638"/>
<dbReference type="Pharos" id="O14668">
    <property type="development level" value="Tbio"/>
</dbReference>
<dbReference type="PRO" id="PR:O14668"/>
<dbReference type="Proteomes" id="UP000005640">
    <property type="component" value="Chromosome X"/>
</dbReference>
<dbReference type="RNAct" id="O14668">
    <property type="molecule type" value="protein"/>
</dbReference>
<dbReference type="Bgee" id="ENSG00000130962">
    <property type="expression patterns" value="Expressed in inferior vagus X ganglion and 189 other cell types or tissues"/>
</dbReference>
<dbReference type="ExpressionAtlas" id="O14668">
    <property type="expression patterns" value="baseline and differential"/>
</dbReference>
<dbReference type="GO" id="GO:0005615">
    <property type="term" value="C:extracellular space"/>
    <property type="evidence" value="ECO:0000318"/>
    <property type="project" value="GO_Central"/>
</dbReference>
<dbReference type="GO" id="GO:0005886">
    <property type="term" value="C:plasma membrane"/>
    <property type="evidence" value="ECO:0000304"/>
    <property type="project" value="ProtInc"/>
</dbReference>
<dbReference type="GO" id="GO:0005509">
    <property type="term" value="F:calcium ion binding"/>
    <property type="evidence" value="ECO:0007669"/>
    <property type="project" value="InterPro"/>
</dbReference>
<dbReference type="GO" id="GO:0004252">
    <property type="term" value="F:serine-type endopeptidase activity"/>
    <property type="evidence" value="ECO:0000318"/>
    <property type="project" value="GO_Central"/>
</dbReference>
<dbReference type="GO" id="GO:0007596">
    <property type="term" value="P:blood coagulation"/>
    <property type="evidence" value="ECO:0000318"/>
    <property type="project" value="GO_Central"/>
</dbReference>
<dbReference type="FunFam" id="4.10.740.10:FF:000001">
    <property type="entry name" value="vitamin K-dependent protein S"/>
    <property type="match status" value="1"/>
</dbReference>
<dbReference type="Gene3D" id="4.10.740.10">
    <property type="entry name" value="Coagulation Factor IX"/>
    <property type="match status" value="1"/>
</dbReference>
<dbReference type="InterPro" id="IPR017857">
    <property type="entry name" value="Coagulation_fac-like_Gla_dom"/>
</dbReference>
<dbReference type="InterPro" id="IPR035972">
    <property type="entry name" value="GLA-like_dom_SF"/>
</dbReference>
<dbReference type="InterPro" id="IPR000294">
    <property type="entry name" value="GLA_domain"/>
</dbReference>
<dbReference type="InterPro" id="IPR050442">
    <property type="entry name" value="Peptidase_S1_coag_factors"/>
</dbReference>
<dbReference type="PANTHER" id="PTHR24278">
    <property type="entry name" value="COAGULATION FACTOR"/>
    <property type="match status" value="1"/>
</dbReference>
<dbReference type="PANTHER" id="PTHR24278:SF37">
    <property type="entry name" value="TRANSMEMBRANE GAMMA-CARBOXYGLUTAMIC ACID PROTEIN 1"/>
    <property type="match status" value="1"/>
</dbReference>
<dbReference type="Pfam" id="PF00594">
    <property type="entry name" value="Gla"/>
    <property type="match status" value="1"/>
</dbReference>
<dbReference type="PRINTS" id="PR00001">
    <property type="entry name" value="GLABLOOD"/>
</dbReference>
<dbReference type="SMART" id="SM00069">
    <property type="entry name" value="GLA"/>
    <property type="match status" value="1"/>
</dbReference>
<dbReference type="SUPFAM" id="SSF57630">
    <property type="entry name" value="GLA-domain"/>
    <property type="match status" value="1"/>
</dbReference>
<dbReference type="PROSITE" id="PS00011">
    <property type="entry name" value="GLA_1"/>
    <property type="match status" value="1"/>
</dbReference>
<dbReference type="PROSITE" id="PS50998">
    <property type="entry name" value="GLA_2"/>
    <property type="match status" value="1"/>
</dbReference>
<reference key="1">
    <citation type="journal article" date="1997" name="Proc. Natl. Acad. Sci. U.S.A.">
        <title>Primary structure and tissue distribution of two novel proline-rich gamma-carboxyglutamic acid proteins.</title>
        <authorList>
            <person name="Kulman J.D."/>
            <person name="Harris J.E."/>
            <person name="Haldeman B.A."/>
            <person name="Davie E.W."/>
        </authorList>
    </citation>
    <scope>NUCLEOTIDE SEQUENCE [MRNA] (ISOFORM 1)</scope>
</reference>
<reference key="2">
    <citation type="journal article" date="2004" name="Nat. Genet.">
        <title>Complete sequencing and characterization of 21,243 full-length human cDNAs.</title>
        <authorList>
            <person name="Ota T."/>
            <person name="Suzuki Y."/>
            <person name="Nishikawa T."/>
            <person name="Otsuki T."/>
            <person name="Sugiyama T."/>
            <person name="Irie R."/>
            <person name="Wakamatsu A."/>
            <person name="Hayashi K."/>
            <person name="Sato H."/>
            <person name="Nagai K."/>
            <person name="Kimura K."/>
            <person name="Makita H."/>
            <person name="Sekine M."/>
            <person name="Obayashi M."/>
            <person name="Nishi T."/>
            <person name="Shibahara T."/>
            <person name="Tanaka T."/>
            <person name="Ishii S."/>
            <person name="Yamamoto J."/>
            <person name="Saito K."/>
            <person name="Kawai Y."/>
            <person name="Isono Y."/>
            <person name="Nakamura Y."/>
            <person name="Nagahari K."/>
            <person name="Murakami K."/>
            <person name="Yasuda T."/>
            <person name="Iwayanagi T."/>
            <person name="Wagatsuma M."/>
            <person name="Shiratori A."/>
            <person name="Sudo H."/>
            <person name="Hosoiri T."/>
            <person name="Kaku Y."/>
            <person name="Kodaira H."/>
            <person name="Kondo H."/>
            <person name="Sugawara M."/>
            <person name="Takahashi M."/>
            <person name="Kanda K."/>
            <person name="Yokoi T."/>
            <person name="Furuya T."/>
            <person name="Kikkawa E."/>
            <person name="Omura Y."/>
            <person name="Abe K."/>
            <person name="Kamihara K."/>
            <person name="Katsuta N."/>
            <person name="Sato K."/>
            <person name="Tanikawa M."/>
            <person name="Yamazaki M."/>
            <person name="Ninomiya K."/>
            <person name="Ishibashi T."/>
            <person name="Yamashita H."/>
            <person name="Murakawa K."/>
            <person name="Fujimori K."/>
            <person name="Tanai H."/>
            <person name="Kimata M."/>
            <person name="Watanabe M."/>
            <person name="Hiraoka S."/>
            <person name="Chiba Y."/>
            <person name="Ishida S."/>
            <person name="Ono Y."/>
            <person name="Takiguchi S."/>
            <person name="Watanabe S."/>
            <person name="Yosida M."/>
            <person name="Hotuta T."/>
            <person name="Kusano J."/>
            <person name="Kanehori K."/>
            <person name="Takahashi-Fujii A."/>
            <person name="Hara H."/>
            <person name="Tanase T.-O."/>
            <person name="Nomura Y."/>
            <person name="Togiya S."/>
            <person name="Komai F."/>
            <person name="Hara R."/>
            <person name="Takeuchi K."/>
            <person name="Arita M."/>
            <person name="Imose N."/>
            <person name="Musashino K."/>
            <person name="Yuuki H."/>
            <person name="Oshima A."/>
            <person name="Sasaki N."/>
            <person name="Aotsuka S."/>
            <person name="Yoshikawa Y."/>
            <person name="Matsunawa H."/>
            <person name="Ichihara T."/>
            <person name="Shiohata N."/>
            <person name="Sano S."/>
            <person name="Moriya S."/>
            <person name="Momiyama H."/>
            <person name="Satoh N."/>
            <person name="Takami S."/>
            <person name="Terashima Y."/>
            <person name="Suzuki O."/>
            <person name="Nakagawa S."/>
            <person name="Senoh A."/>
            <person name="Mizoguchi H."/>
            <person name="Goto Y."/>
            <person name="Shimizu F."/>
            <person name="Wakebe H."/>
            <person name="Hishigaki H."/>
            <person name="Watanabe T."/>
            <person name="Sugiyama A."/>
            <person name="Takemoto M."/>
            <person name="Kawakami B."/>
            <person name="Yamazaki M."/>
            <person name="Watanabe K."/>
            <person name="Kumagai A."/>
            <person name="Itakura S."/>
            <person name="Fukuzumi Y."/>
            <person name="Fujimori Y."/>
            <person name="Komiyama M."/>
            <person name="Tashiro H."/>
            <person name="Tanigami A."/>
            <person name="Fujiwara T."/>
            <person name="Ono T."/>
            <person name="Yamada K."/>
            <person name="Fujii Y."/>
            <person name="Ozaki K."/>
            <person name="Hirao M."/>
            <person name="Ohmori Y."/>
            <person name="Kawabata A."/>
            <person name="Hikiji T."/>
            <person name="Kobatake N."/>
            <person name="Inagaki H."/>
            <person name="Ikema Y."/>
            <person name="Okamoto S."/>
            <person name="Okitani R."/>
            <person name="Kawakami T."/>
            <person name="Noguchi S."/>
            <person name="Itoh T."/>
            <person name="Shigeta K."/>
            <person name="Senba T."/>
            <person name="Matsumura K."/>
            <person name="Nakajima Y."/>
            <person name="Mizuno T."/>
            <person name="Morinaga M."/>
            <person name="Sasaki M."/>
            <person name="Togashi T."/>
            <person name="Oyama M."/>
            <person name="Hata H."/>
            <person name="Watanabe M."/>
            <person name="Komatsu T."/>
            <person name="Mizushima-Sugano J."/>
            <person name="Satoh T."/>
            <person name="Shirai Y."/>
            <person name="Takahashi Y."/>
            <person name="Nakagawa K."/>
            <person name="Okumura K."/>
            <person name="Nagase T."/>
            <person name="Nomura N."/>
            <person name="Kikuchi H."/>
            <person name="Masuho Y."/>
            <person name="Yamashita R."/>
            <person name="Nakai K."/>
            <person name="Yada T."/>
            <person name="Nakamura Y."/>
            <person name="Ohara O."/>
            <person name="Isogai T."/>
            <person name="Sugano S."/>
        </authorList>
    </citation>
    <scope>NUCLEOTIDE SEQUENCE [LARGE SCALE MRNA] (ISOFORM 1)</scope>
    <source>
        <tissue>Hippocampus</tissue>
    </source>
</reference>
<reference key="3">
    <citation type="journal article" date="2005" name="Nature">
        <title>The DNA sequence of the human X chromosome.</title>
        <authorList>
            <person name="Ross M.T."/>
            <person name="Grafham D.V."/>
            <person name="Coffey A.J."/>
            <person name="Scherer S."/>
            <person name="McLay K."/>
            <person name="Muzny D."/>
            <person name="Platzer M."/>
            <person name="Howell G.R."/>
            <person name="Burrows C."/>
            <person name="Bird C.P."/>
            <person name="Frankish A."/>
            <person name="Lovell F.L."/>
            <person name="Howe K.L."/>
            <person name="Ashurst J.L."/>
            <person name="Fulton R.S."/>
            <person name="Sudbrak R."/>
            <person name="Wen G."/>
            <person name="Jones M.C."/>
            <person name="Hurles M.E."/>
            <person name="Andrews T.D."/>
            <person name="Scott C.E."/>
            <person name="Searle S."/>
            <person name="Ramser J."/>
            <person name="Whittaker A."/>
            <person name="Deadman R."/>
            <person name="Carter N.P."/>
            <person name="Hunt S.E."/>
            <person name="Chen R."/>
            <person name="Cree A."/>
            <person name="Gunaratne P."/>
            <person name="Havlak P."/>
            <person name="Hodgson A."/>
            <person name="Metzker M.L."/>
            <person name="Richards S."/>
            <person name="Scott G."/>
            <person name="Steffen D."/>
            <person name="Sodergren E."/>
            <person name="Wheeler D.A."/>
            <person name="Worley K.C."/>
            <person name="Ainscough R."/>
            <person name="Ambrose K.D."/>
            <person name="Ansari-Lari M.A."/>
            <person name="Aradhya S."/>
            <person name="Ashwell R.I."/>
            <person name="Babbage A.K."/>
            <person name="Bagguley C.L."/>
            <person name="Ballabio A."/>
            <person name="Banerjee R."/>
            <person name="Barker G.E."/>
            <person name="Barlow K.F."/>
            <person name="Barrett I.P."/>
            <person name="Bates K.N."/>
            <person name="Beare D.M."/>
            <person name="Beasley H."/>
            <person name="Beasley O."/>
            <person name="Beck A."/>
            <person name="Bethel G."/>
            <person name="Blechschmidt K."/>
            <person name="Brady N."/>
            <person name="Bray-Allen S."/>
            <person name="Bridgeman A.M."/>
            <person name="Brown A.J."/>
            <person name="Brown M.J."/>
            <person name="Bonnin D."/>
            <person name="Bruford E.A."/>
            <person name="Buhay C."/>
            <person name="Burch P."/>
            <person name="Burford D."/>
            <person name="Burgess J."/>
            <person name="Burrill W."/>
            <person name="Burton J."/>
            <person name="Bye J.M."/>
            <person name="Carder C."/>
            <person name="Carrel L."/>
            <person name="Chako J."/>
            <person name="Chapman J.C."/>
            <person name="Chavez D."/>
            <person name="Chen E."/>
            <person name="Chen G."/>
            <person name="Chen Y."/>
            <person name="Chen Z."/>
            <person name="Chinault C."/>
            <person name="Ciccodicola A."/>
            <person name="Clark S.Y."/>
            <person name="Clarke G."/>
            <person name="Clee C.M."/>
            <person name="Clegg S."/>
            <person name="Clerc-Blankenburg K."/>
            <person name="Clifford K."/>
            <person name="Cobley V."/>
            <person name="Cole C.G."/>
            <person name="Conquer J.S."/>
            <person name="Corby N."/>
            <person name="Connor R.E."/>
            <person name="David R."/>
            <person name="Davies J."/>
            <person name="Davis C."/>
            <person name="Davis J."/>
            <person name="Delgado O."/>
            <person name="Deshazo D."/>
            <person name="Dhami P."/>
            <person name="Ding Y."/>
            <person name="Dinh H."/>
            <person name="Dodsworth S."/>
            <person name="Draper H."/>
            <person name="Dugan-Rocha S."/>
            <person name="Dunham A."/>
            <person name="Dunn M."/>
            <person name="Durbin K.J."/>
            <person name="Dutta I."/>
            <person name="Eades T."/>
            <person name="Ellwood M."/>
            <person name="Emery-Cohen A."/>
            <person name="Errington H."/>
            <person name="Evans K.L."/>
            <person name="Faulkner L."/>
            <person name="Francis F."/>
            <person name="Frankland J."/>
            <person name="Fraser A.E."/>
            <person name="Galgoczy P."/>
            <person name="Gilbert J."/>
            <person name="Gill R."/>
            <person name="Gloeckner G."/>
            <person name="Gregory S.G."/>
            <person name="Gribble S."/>
            <person name="Griffiths C."/>
            <person name="Grocock R."/>
            <person name="Gu Y."/>
            <person name="Gwilliam R."/>
            <person name="Hamilton C."/>
            <person name="Hart E.A."/>
            <person name="Hawes A."/>
            <person name="Heath P.D."/>
            <person name="Heitmann K."/>
            <person name="Hennig S."/>
            <person name="Hernandez J."/>
            <person name="Hinzmann B."/>
            <person name="Ho S."/>
            <person name="Hoffs M."/>
            <person name="Howden P.J."/>
            <person name="Huckle E.J."/>
            <person name="Hume J."/>
            <person name="Hunt P.J."/>
            <person name="Hunt A.R."/>
            <person name="Isherwood J."/>
            <person name="Jacob L."/>
            <person name="Johnson D."/>
            <person name="Jones S."/>
            <person name="de Jong P.J."/>
            <person name="Joseph S.S."/>
            <person name="Keenan S."/>
            <person name="Kelly S."/>
            <person name="Kershaw J.K."/>
            <person name="Khan Z."/>
            <person name="Kioschis P."/>
            <person name="Klages S."/>
            <person name="Knights A.J."/>
            <person name="Kosiura A."/>
            <person name="Kovar-Smith C."/>
            <person name="Laird G.K."/>
            <person name="Langford C."/>
            <person name="Lawlor S."/>
            <person name="Leversha M."/>
            <person name="Lewis L."/>
            <person name="Liu W."/>
            <person name="Lloyd C."/>
            <person name="Lloyd D.M."/>
            <person name="Loulseged H."/>
            <person name="Loveland J.E."/>
            <person name="Lovell J.D."/>
            <person name="Lozado R."/>
            <person name="Lu J."/>
            <person name="Lyne R."/>
            <person name="Ma J."/>
            <person name="Maheshwari M."/>
            <person name="Matthews L.H."/>
            <person name="McDowall J."/>
            <person name="McLaren S."/>
            <person name="McMurray A."/>
            <person name="Meidl P."/>
            <person name="Meitinger T."/>
            <person name="Milne S."/>
            <person name="Miner G."/>
            <person name="Mistry S.L."/>
            <person name="Morgan M."/>
            <person name="Morris S."/>
            <person name="Mueller I."/>
            <person name="Mullikin J.C."/>
            <person name="Nguyen N."/>
            <person name="Nordsiek G."/>
            <person name="Nyakatura G."/>
            <person name="O'dell C.N."/>
            <person name="Okwuonu G."/>
            <person name="Palmer S."/>
            <person name="Pandian R."/>
            <person name="Parker D."/>
            <person name="Parrish J."/>
            <person name="Pasternak S."/>
            <person name="Patel D."/>
            <person name="Pearce A.V."/>
            <person name="Pearson D.M."/>
            <person name="Pelan S.E."/>
            <person name="Perez L."/>
            <person name="Porter K.M."/>
            <person name="Ramsey Y."/>
            <person name="Reichwald K."/>
            <person name="Rhodes S."/>
            <person name="Ridler K.A."/>
            <person name="Schlessinger D."/>
            <person name="Schueler M.G."/>
            <person name="Sehra H.K."/>
            <person name="Shaw-Smith C."/>
            <person name="Shen H."/>
            <person name="Sheridan E.M."/>
            <person name="Shownkeen R."/>
            <person name="Skuce C.D."/>
            <person name="Smith M.L."/>
            <person name="Sotheran E.C."/>
            <person name="Steingruber H.E."/>
            <person name="Steward C.A."/>
            <person name="Storey R."/>
            <person name="Swann R.M."/>
            <person name="Swarbreck D."/>
            <person name="Tabor P.E."/>
            <person name="Taudien S."/>
            <person name="Taylor T."/>
            <person name="Teague B."/>
            <person name="Thomas K."/>
            <person name="Thorpe A."/>
            <person name="Timms K."/>
            <person name="Tracey A."/>
            <person name="Trevanion S."/>
            <person name="Tromans A.C."/>
            <person name="d'Urso M."/>
            <person name="Verduzco D."/>
            <person name="Villasana D."/>
            <person name="Waldron L."/>
            <person name="Wall M."/>
            <person name="Wang Q."/>
            <person name="Warren J."/>
            <person name="Warry G.L."/>
            <person name="Wei X."/>
            <person name="West A."/>
            <person name="Whitehead S.L."/>
            <person name="Whiteley M.N."/>
            <person name="Wilkinson J.E."/>
            <person name="Willey D.L."/>
            <person name="Williams G."/>
            <person name="Williams L."/>
            <person name="Williamson A."/>
            <person name="Williamson H."/>
            <person name="Wilming L."/>
            <person name="Woodmansey R.L."/>
            <person name="Wray P.W."/>
            <person name="Yen J."/>
            <person name="Zhang J."/>
            <person name="Zhou J."/>
            <person name="Zoghbi H."/>
            <person name="Zorilla S."/>
            <person name="Buck D."/>
            <person name="Reinhardt R."/>
            <person name="Poustka A."/>
            <person name="Rosenthal A."/>
            <person name="Lehrach H."/>
            <person name="Meindl A."/>
            <person name="Minx P.J."/>
            <person name="Hillier L.W."/>
            <person name="Willard H.F."/>
            <person name="Wilson R.K."/>
            <person name="Waterston R.H."/>
            <person name="Rice C.M."/>
            <person name="Vaudin M."/>
            <person name="Coulson A."/>
            <person name="Nelson D.L."/>
            <person name="Weinstock G."/>
            <person name="Sulston J.E."/>
            <person name="Durbin R.M."/>
            <person name="Hubbard T."/>
            <person name="Gibbs R.A."/>
            <person name="Beck S."/>
            <person name="Rogers J."/>
            <person name="Bentley D.R."/>
        </authorList>
    </citation>
    <scope>NUCLEOTIDE SEQUENCE [LARGE SCALE GENOMIC DNA]</scope>
</reference>
<reference key="4">
    <citation type="submission" date="2005-09" db="EMBL/GenBank/DDBJ databases">
        <authorList>
            <person name="Mural R.J."/>
            <person name="Istrail S."/>
            <person name="Sutton G.G."/>
            <person name="Florea L."/>
            <person name="Halpern A.L."/>
            <person name="Mobarry C.M."/>
            <person name="Lippert R."/>
            <person name="Walenz B."/>
            <person name="Shatkay H."/>
            <person name="Dew I."/>
            <person name="Miller J.R."/>
            <person name="Flanigan M.J."/>
            <person name="Edwards N.J."/>
            <person name="Bolanos R."/>
            <person name="Fasulo D."/>
            <person name="Halldorsson B.V."/>
            <person name="Hannenhalli S."/>
            <person name="Turner R."/>
            <person name="Yooseph S."/>
            <person name="Lu F."/>
            <person name="Nusskern D.R."/>
            <person name="Shue B.C."/>
            <person name="Zheng X.H."/>
            <person name="Zhong F."/>
            <person name="Delcher A.L."/>
            <person name="Huson D.H."/>
            <person name="Kravitz S.A."/>
            <person name="Mouchard L."/>
            <person name="Reinert K."/>
            <person name="Remington K.A."/>
            <person name="Clark A.G."/>
            <person name="Waterman M.S."/>
            <person name="Eichler E.E."/>
            <person name="Adams M.D."/>
            <person name="Hunkapiller M.W."/>
            <person name="Myers E.W."/>
            <person name="Venter J.C."/>
        </authorList>
    </citation>
    <scope>NUCLEOTIDE SEQUENCE [LARGE SCALE GENOMIC DNA]</scope>
</reference>
<reference key="5">
    <citation type="journal article" date="2004" name="Genome Res.">
        <title>The status, quality, and expansion of the NIH full-length cDNA project: the Mammalian Gene Collection (MGC).</title>
        <authorList>
            <consortium name="The MGC Project Team"/>
        </authorList>
    </citation>
    <scope>NUCLEOTIDE SEQUENCE [LARGE SCALE MRNA] (ISOFORMS 1 AND 2)</scope>
    <source>
        <tissue>Astrocytoma</tissue>
        <tissue>Placenta</tissue>
    </source>
</reference>
<reference key="6">
    <citation type="journal article" date="2010" name="Sci. Signal.">
        <title>Quantitative phosphoproteomics reveals widespread full phosphorylation site occupancy during mitosis.</title>
        <authorList>
            <person name="Olsen J.V."/>
            <person name="Vermeulen M."/>
            <person name="Santamaria A."/>
            <person name="Kumar C."/>
            <person name="Miller M.L."/>
            <person name="Jensen L.J."/>
            <person name="Gnad F."/>
            <person name="Cox J."/>
            <person name="Jensen T.S."/>
            <person name="Nigg E.A."/>
            <person name="Brunak S."/>
            <person name="Mann M."/>
        </authorList>
    </citation>
    <scope>IDENTIFICATION BY MASS SPECTROMETRY [LARGE SCALE ANALYSIS]</scope>
    <source>
        <tissue>Cervix carcinoma</tissue>
    </source>
</reference>
<reference key="7">
    <citation type="journal article" date="2006" name="Science">
        <title>The consensus coding sequences of human breast and colorectal cancers.</title>
        <authorList>
            <person name="Sjoeblom T."/>
            <person name="Jones S."/>
            <person name="Wood L.D."/>
            <person name="Parsons D.W."/>
            <person name="Lin J."/>
            <person name="Barber T.D."/>
            <person name="Mandelker D."/>
            <person name="Leary R.J."/>
            <person name="Ptak J."/>
            <person name="Silliman N."/>
            <person name="Szabo S."/>
            <person name="Buckhaults P."/>
            <person name="Farrell C."/>
            <person name="Meeh P."/>
            <person name="Markowitz S.D."/>
            <person name="Willis J."/>
            <person name="Dawson D."/>
            <person name="Willson J.K.V."/>
            <person name="Gazdar A.F."/>
            <person name="Hartigan J."/>
            <person name="Wu L."/>
            <person name="Liu C."/>
            <person name="Parmigiani G."/>
            <person name="Park B.H."/>
            <person name="Bachman K.E."/>
            <person name="Papadopoulos N."/>
            <person name="Vogelstein B."/>
            <person name="Kinzler K.W."/>
            <person name="Velculescu V.E."/>
        </authorList>
    </citation>
    <scope>VARIANT [LARGE SCALE ANALYSIS] ILE-60</scope>
</reference>
<organism>
    <name type="scientific">Homo sapiens</name>
    <name type="common">Human</name>
    <dbReference type="NCBI Taxonomy" id="9606"/>
    <lineage>
        <taxon>Eukaryota</taxon>
        <taxon>Metazoa</taxon>
        <taxon>Chordata</taxon>
        <taxon>Craniata</taxon>
        <taxon>Vertebrata</taxon>
        <taxon>Euteleostomi</taxon>
        <taxon>Mammalia</taxon>
        <taxon>Eutheria</taxon>
        <taxon>Euarchontoglires</taxon>
        <taxon>Primates</taxon>
        <taxon>Haplorrhini</taxon>
        <taxon>Catarrhini</taxon>
        <taxon>Hominidae</taxon>
        <taxon>Homo</taxon>
    </lineage>
</organism>